<evidence type="ECO:0000250" key="1"/>
<evidence type="ECO:0000250" key="2">
    <source>
        <dbReference type="UniProtKB" id="P02318"/>
    </source>
</evidence>
<evidence type="ECO:0000269" key="3">
    <source>
    </source>
</evidence>
<evidence type="ECO:0000305" key="4"/>
<sequence>MARYRCCLTHSRSRCRRRRRRRCRRRRRRFGRRRRRRVCCRRYTVVRCTRQ</sequence>
<proteinExistence type="evidence at protein level"/>
<protein>
    <recommendedName>
        <fullName>Sperm protamine P1</fullName>
    </recommendedName>
    <alternativeName>
        <fullName>Cysteine-rich protamine</fullName>
    </alternativeName>
</protein>
<keyword id="KW-0158">Chromosome</keyword>
<keyword id="KW-0217">Developmental protein</keyword>
<keyword id="KW-0221">Differentiation</keyword>
<keyword id="KW-0903">Direct protein sequencing</keyword>
<keyword id="KW-1015">Disulfide bond</keyword>
<keyword id="KW-0226">DNA condensation</keyword>
<keyword id="KW-0238">DNA-binding</keyword>
<keyword id="KW-0544">Nucleosome core</keyword>
<keyword id="KW-0539">Nucleus</keyword>
<keyword id="KW-1185">Reference proteome</keyword>
<keyword id="KW-0744">Spermatogenesis</keyword>
<dbReference type="PIR" id="A02658">
    <property type="entry name" value="HSSH"/>
</dbReference>
<dbReference type="RefSeq" id="NP_001156522.1">
    <property type="nucleotide sequence ID" value="NM_001163050.1"/>
</dbReference>
<dbReference type="Ensembl" id="ENSOART00025020872">
    <property type="protein sequence ID" value="ENSOARP00025010390"/>
    <property type="gene ID" value="ENSOARG00025012686"/>
</dbReference>
<dbReference type="Ensembl" id="ENSOART00040046621">
    <property type="protein sequence ID" value="ENSOARP00040023758"/>
    <property type="gene ID" value="ENSOARG00040028095"/>
</dbReference>
<dbReference type="Ensembl" id="ENSOART00180043980">
    <property type="protein sequence ID" value="ENSOARP00180022586"/>
    <property type="gene ID" value="ENSOARG00180026538"/>
</dbReference>
<dbReference type="Ensembl" id="ENSOART00185031003">
    <property type="protein sequence ID" value="ENSOARP00185015050"/>
    <property type="gene ID" value="ENSOARG00185018958"/>
</dbReference>
<dbReference type="Ensembl" id="ENSOART00215050119">
    <property type="protein sequence ID" value="ENSOARP00215026015"/>
    <property type="gene ID" value="ENSOARG00215029985"/>
</dbReference>
<dbReference type="Ensembl" id="ENSOART00220060756">
    <property type="protein sequence ID" value="ENSOARP00220032508"/>
    <property type="gene ID" value="ENSOARG00220036700"/>
</dbReference>
<dbReference type="Ensembl" id="ENSOART00225043708">
    <property type="protein sequence ID" value="ENSOARP00225021365"/>
    <property type="gene ID" value="ENSOARG00225026682"/>
</dbReference>
<dbReference type="GeneID" id="100302352"/>
<dbReference type="KEGG" id="oas:100302352"/>
<dbReference type="CTD" id="5619"/>
<dbReference type="Proteomes" id="UP000002356">
    <property type="component" value="Unplaced"/>
</dbReference>
<dbReference type="GO" id="GO:0000786">
    <property type="term" value="C:nucleosome"/>
    <property type="evidence" value="ECO:0007669"/>
    <property type="project" value="UniProtKB-KW"/>
</dbReference>
<dbReference type="GO" id="GO:0005634">
    <property type="term" value="C:nucleus"/>
    <property type="evidence" value="ECO:0007669"/>
    <property type="project" value="UniProtKB-SubCell"/>
</dbReference>
<dbReference type="GO" id="GO:0003677">
    <property type="term" value="F:DNA binding"/>
    <property type="evidence" value="ECO:0007669"/>
    <property type="project" value="UniProtKB-KW"/>
</dbReference>
<dbReference type="GO" id="GO:0030261">
    <property type="term" value="P:chromosome condensation"/>
    <property type="evidence" value="ECO:0007669"/>
    <property type="project" value="UniProtKB-KW"/>
</dbReference>
<dbReference type="GO" id="GO:0035092">
    <property type="term" value="P:sperm DNA condensation"/>
    <property type="evidence" value="ECO:0007669"/>
    <property type="project" value="InterPro"/>
</dbReference>
<dbReference type="InterPro" id="IPR000221">
    <property type="entry name" value="Protamine_P1"/>
</dbReference>
<dbReference type="Pfam" id="PF00260">
    <property type="entry name" value="Protamine_P1"/>
    <property type="match status" value="1"/>
</dbReference>
<dbReference type="PROSITE" id="PS00048">
    <property type="entry name" value="PROTAMINE_P1"/>
    <property type="match status" value="1"/>
</dbReference>
<comment type="function">
    <text>Protamines substitute for histones in the chromatin of sperm during the haploid phase of spermatogenesis. They compact sperm DNA into a highly condensed, stable and inactive complex.</text>
</comment>
<comment type="subunit">
    <text evidence="1">Cross-linked by interchain disulfide bonds around the DNA-helix.</text>
</comment>
<comment type="subcellular location">
    <subcellularLocation>
        <location>Nucleus</location>
    </subcellularLocation>
    <subcellularLocation>
        <location>Chromosome</location>
    </subcellularLocation>
</comment>
<comment type="tissue specificity">
    <text>Testis.</text>
</comment>
<comment type="similarity">
    <text evidence="4">Belongs to the protamine P1 family.</text>
</comment>
<name>HSP1_SHEEP</name>
<accession>P68038</accession>
<accession>P04102</accession>
<feature type="initiator methionine" description="Removed" evidence="3">
    <location>
        <position position="1"/>
    </location>
</feature>
<feature type="chain" id="PRO_0000191557" description="Sperm protamine P1">
    <location>
        <begin position="2"/>
        <end position="51"/>
    </location>
</feature>
<feature type="disulfide bond" description="Interchain (with C-23)" evidence="2">
    <location>
        <position position="6"/>
    </location>
</feature>
<feature type="disulfide bond" evidence="2">
    <location>
        <begin position="7"/>
        <end position="15"/>
    </location>
</feature>
<feature type="disulfide bond" description="Interchain (with C-6)" evidence="2">
    <location>
        <position position="23"/>
    </location>
</feature>
<feature type="disulfide bond" description="Interchain (with C-39)" evidence="2">
    <location>
        <position position="39"/>
    </location>
</feature>
<feature type="disulfide bond" evidence="2">
    <location>
        <begin position="40"/>
        <end position="48"/>
    </location>
</feature>
<reference key="1">
    <citation type="journal article" date="1984" name="Eur. J. Biochem.">
        <title>Primary structure of the ram (Ovis aries) protamine.</title>
        <authorList>
            <person name="Sautiere P."/>
            <person name="Belaiche D."/>
            <person name="Martinage A."/>
            <person name="Loir M."/>
        </authorList>
    </citation>
    <scope>PROTEIN SEQUENCE OF 2-51</scope>
</reference>
<gene>
    <name type="primary">PRM1</name>
    <name type="synonym">PRM-1</name>
</gene>
<organism>
    <name type="scientific">Ovis aries</name>
    <name type="common">Sheep</name>
    <dbReference type="NCBI Taxonomy" id="9940"/>
    <lineage>
        <taxon>Eukaryota</taxon>
        <taxon>Metazoa</taxon>
        <taxon>Chordata</taxon>
        <taxon>Craniata</taxon>
        <taxon>Vertebrata</taxon>
        <taxon>Euteleostomi</taxon>
        <taxon>Mammalia</taxon>
        <taxon>Eutheria</taxon>
        <taxon>Laurasiatheria</taxon>
        <taxon>Artiodactyla</taxon>
        <taxon>Ruminantia</taxon>
        <taxon>Pecora</taxon>
        <taxon>Bovidae</taxon>
        <taxon>Caprinae</taxon>
        <taxon>Ovis</taxon>
    </lineage>
</organism>